<organism>
    <name type="scientific">Salmonella typhi</name>
    <dbReference type="NCBI Taxonomy" id="90370"/>
    <lineage>
        <taxon>Bacteria</taxon>
        <taxon>Pseudomonadati</taxon>
        <taxon>Pseudomonadota</taxon>
        <taxon>Gammaproteobacteria</taxon>
        <taxon>Enterobacterales</taxon>
        <taxon>Enterobacteriaceae</taxon>
        <taxon>Salmonella</taxon>
    </lineage>
</organism>
<gene>
    <name evidence="1" type="primary">yihI</name>
    <name type="ordered locus">STY3878</name>
    <name type="ordered locus">t3618</name>
</gene>
<keyword id="KW-0343">GTPase activation</keyword>
<keyword id="KW-0690">Ribosome biogenesis</keyword>
<name>YIHI_SALTI</name>
<feature type="chain" id="PRO_0000209591" description="Der GTPase-activating protein YihI">
    <location>
        <begin position="1"/>
        <end position="171"/>
    </location>
</feature>
<feature type="region of interest" description="Disordered" evidence="2">
    <location>
        <begin position="1"/>
        <end position="99"/>
    </location>
</feature>
<feature type="region of interest" description="Disordered" evidence="2">
    <location>
        <begin position="145"/>
        <end position="171"/>
    </location>
</feature>
<feature type="compositionally biased region" description="Basic and acidic residues" evidence="2">
    <location>
        <begin position="20"/>
        <end position="30"/>
    </location>
</feature>
<feature type="compositionally biased region" description="Basic residues" evidence="2">
    <location>
        <begin position="31"/>
        <end position="40"/>
    </location>
</feature>
<feature type="compositionally biased region" description="Acidic residues" evidence="2">
    <location>
        <begin position="147"/>
        <end position="160"/>
    </location>
</feature>
<protein>
    <recommendedName>
        <fullName evidence="1">Der GTPase-activating protein YihI</fullName>
    </recommendedName>
</protein>
<sequence>MKKPTSAPRSKAFGKQRRKTREELNQEARDRKRLKKHRGHAPGSRAAGGNSASGGGNQNQQKDPRIGSKTPVPLGVTEKVTQQHKPKSEKPMLSPQAELDLLETDERLDALLERLEAGETLSAEDQAWVDAKLDRIDELMQKLGLSYDDDEEDDEEDEKQEDMMRLLRGGN</sequence>
<reference key="1">
    <citation type="journal article" date="2001" name="Nature">
        <title>Complete genome sequence of a multiple drug resistant Salmonella enterica serovar Typhi CT18.</title>
        <authorList>
            <person name="Parkhill J."/>
            <person name="Dougan G."/>
            <person name="James K.D."/>
            <person name="Thomson N.R."/>
            <person name="Pickard D."/>
            <person name="Wain J."/>
            <person name="Churcher C.M."/>
            <person name="Mungall K.L."/>
            <person name="Bentley S.D."/>
            <person name="Holden M.T.G."/>
            <person name="Sebaihia M."/>
            <person name="Baker S."/>
            <person name="Basham D."/>
            <person name="Brooks K."/>
            <person name="Chillingworth T."/>
            <person name="Connerton P."/>
            <person name="Cronin A."/>
            <person name="Davis P."/>
            <person name="Davies R.M."/>
            <person name="Dowd L."/>
            <person name="White N."/>
            <person name="Farrar J."/>
            <person name="Feltwell T."/>
            <person name="Hamlin N."/>
            <person name="Haque A."/>
            <person name="Hien T.T."/>
            <person name="Holroyd S."/>
            <person name="Jagels K."/>
            <person name="Krogh A."/>
            <person name="Larsen T.S."/>
            <person name="Leather S."/>
            <person name="Moule S."/>
            <person name="O'Gaora P."/>
            <person name="Parry C."/>
            <person name="Quail M.A."/>
            <person name="Rutherford K.M."/>
            <person name="Simmonds M."/>
            <person name="Skelton J."/>
            <person name="Stevens K."/>
            <person name="Whitehead S."/>
            <person name="Barrell B.G."/>
        </authorList>
    </citation>
    <scope>NUCLEOTIDE SEQUENCE [LARGE SCALE GENOMIC DNA]</scope>
    <source>
        <strain>CT18</strain>
    </source>
</reference>
<reference key="2">
    <citation type="journal article" date="2003" name="J. Bacteriol.">
        <title>Comparative genomics of Salmonella enterica serovar Typhi strains Ty2 and CT18.</title>
        <authorList>
            <person name="Deng W."/>
            <person name="Liou S.-R."/>
            <person name="Plunkett G. III"/>
            <person name="Mayhew G.F."/>
            <person name="Rose D.J."/>
            <person name="Burland V."/>
            <person name="Kodoyianni V."/>
            <person name="Schwartz D.C."/>
            <person name="Blattner F.R."/>
        </authorList>
    </citation>
    <scope>NUCLEOTIDE SEQUENCE [LARGE SCALE GENOMIC DNA]</scope>
    <source>
        <strain>ATCC 700931 / Ty2</strain>
    </source>
</reference>
<comment type="function">
    <text evidence="1">A GTPase-activating protein (GAP) that modifies Der/EngA GTPase function. May play a role in ribosome biogenesis.</text>
</comment>
<comment type="subunit">
    <text evidence="1">Interacts with Der.</text>
</comment>
<comment type="similarity">
    <text evidence="1">Belongs to the YihI family.</text>
</comment>
<accession>P0A2N9</accession>
<accession>P37130</accession>
<evidence type="ECO:0000255" key="1">
    <source>
        <dbReference type="HAMAP-Rule" id="MF_01058"/>
    </source>
</evidence>
<evidence type="ECO:0000256" key="2">
    <source>
        <dbReference type="SAM" id="MobiDB-lite"/>
    </source>
</evidence>
<proteinExistence type="inferred from homology"/>
<dbReference type="EMBL" id="AL513382">
    <property type="protein sequence ID" value="CAD03097.1"/>
    <property type="molecule type" value="Genomic_DNA"/>
</dbReference>
<dbReference type="EMBL" id="AE014613">
    <property type="protein sequence ID" value="AAO71119.1"/>
    <property type="molecule type" value="Genomic_DNA"/>
</dbReference>
<dbReference type="RefSeq" id="NP_458046.1">
    <property type="nucleotide sequence ID" value="NC_003198.1"/>
</dbReference>
<dbReference type="RefSeq" id="WP_000743292.1">
    <property type="nucleotide sequence ID" value="NZ_WSUR01000010.1"/>
</dbReference>
<dbReference type="SMR" id="P0A2N9"/>
<dbReference type="STRING" id="220341.gene:17587734"/>
<dbReference type="KEGG" id="stt:t3618"/>
<dbReference type="KEGG" id="sty:STY3878"/>
<dbReference type="PATRIC" id="fig|220341.7.peg.3957"/>
<dbReference type="eggNOG" id="COG3078">
    <property type="taxonomic scope" value="Bacteria"/>
</dbReference>
<dbReference type="HOGENOM" id="CLU_094104_2_0_6"/>
<dbReference type="OMA" id="ENNECLN"/>
<dbReference type="OrthoDB" id="5677577at2"/>
<dbReference type="Proteomes" id="UP000000541">
    <property type="component" value="Chromosome"/>
</dbReference>
<dbReference type="Proteomes" id="UP000002670">
    <property type="component" value="Chromosome"/>
</dbReference>
<dbReference type="GO" id="GO:0005096">
    <property type="term" value="F:GTPase activator activity"/>
    <property type="evidence" value="ECO:0007669"/>
    <property type="project" value="UniProtKB-KW"/>
</dbReference>
<dbReference type="GO" id="GO:0042254">
    <property type="term" value="P:ribosome biogenesis"/>
    <property type="evidence" value="ECO:0007669"/>
    <property type="project" value="UniProtKB-KW"/>
</dbReference>
<dbReference type="HAMAP" id="MF_01058">
    <property type="entry name" value="GAP_YihI"/>
    <property type="match status" value="1"/>
</dbReference>
<dbReference type="InterPro" id="IPR007336">
    <property type="entry name" value="YihI"/>
</dbReference>
<dbReference type="NCBIfam" id="NF003560">
    <property type="entry name" value="PRK05244.1-1"/>
    <property type="match status" value="1"/>
</dbReference>
<dbReference type="Pfam" id="PF04220">
    <property type="entry name" value="YihI"/>
    <property type="match status" value="1"/>
</dbReference>